<keyword id="KW-0067">ATP-binding</keyword>
<keyword id="KW-0173">Coenzyme A biosynthesis</keyword>
<keyword id="KW-0963">Cytoplasm</keyword>
<keyword id="KW-0418">Kinase</keyword>
<keyword id="KW-0547">Nucleotide-binding</keyword>
<keyword id="KW-0808">Transferase</keyword>
<protein>
    <recommendedName>
        <fullName evidence="1">Pantothenate kinase</fullName>
        <ecNumber evidence="1">2.7.1.33</ecNumber>
    </recommendedName>
    <alternativeName>
        <fullName evidence="1">Pantothenic acid kinase</fullName>
    </alternativeName>
</protein>
<name>COAA_STRP7</name>
<organism>
    <name type="scientific">Streptococcus pneumoniae (strain 70585)</name>
    <dbReference type="NCBI Taxonomy" id="488221"/>
    <lineage>
        <taxon>Bacteria</taxon>
        <taxon>Bacillati</taxon>
        <taxon>Bacillota</taxon>
        <taxon>Bacilli</taxon>
        <taxon>Lactobacillales</taxon>
        <taxon>Streptococcaceae</taxon>
        <taxon>Streptococcus</taxon>
    </lineage>
</organism>
<feature type="chain" id="PRO_1000124809" description="Pantothenate kinase">
    <location>
        <begin position="1"/>
        <end position="306"/>
    </location>
</feature>
<feature type="binding site" evidence="1">
    <location>
        <begin position="91"/>
        <end position="98"/>
    </location>
    <ligand>
        <name>ATP</name>
        <dbReference type="ChEBI" id="CHEBI:30616"/>
    </ligand>
</feature>
<comment type="catalytic activity">
    <reaction evidence="1">
        <text>(R)-pantothenate + ATP = (R)-4'-phosphopantothenate + ADP + H(+)</text>
        <dbReference type="Rhea" id="RHEA:16373"/>
        <dbReference type="ChEBI" id="CHEBI:10986"/>
        <dbReference type="ChEBI" id="CHEBI:15378"/>
        <dbReference type="ChEBI" id="CHEBI:29032"/>
        <dbReference type="ChEBI" id="CHEBI:30616"/>
        <dbReference type="ChEBI" id="CHEBI:456216"/>
        <dbReference type="EC" id="2.7.1.33"/>
    </reaction>
</comment>
<comment type="pathway">
    <text evidence="1">Cofactor biosynthesis; coenzyme A biosynthesis; CoA from (R)-pantothenate: step 1/5.</text>
</comment>
<comment type="subcellular location">
    <subcellularLocation>
        <location evidence="1">Cytoplasm</location>
    </subcellularLocation>
</comment>
<comment type="similarity">
    <text evidence="1">Belongs to the prokaryotic pantothenate kinase family.</text>
</comment>
<sequence>MTNEFLHFEKISRQTWQSLHRKTTPPLTEEELESIKSFNDQISLQDVTDIYLPLAHLIQIYKRTKEDLAFSKGIFLQRESKSQPFIIGVSGSVAVGKSTTSRLLQILLSRTFTDATVELVTTDGFLYPNQTLIEQGILNRKGFPESYNMEALLNFLDRIKNGQDVDIPVYSHEVYDIVPEEKQSVKAADFVIVEGINVFQNPQNDRLYITDFFDFSIYVDAGVDDIESWYLDRFLKMLSLAQNDPDSYYYRFTQMPIGEVEAFAHQVWTSINLTNLQNYIEPTRNRAEVILHKSKNHEIDEIYLKK</sequence>
<gene>
    <name evidence="1" type="primary">coaA</name>
    <name type="ordered locus">SP70585_0875</name>
</gene>
<dbReference type="EC" id="2.7.1.33" evidence="1"/>
<dbReference type="EMBL" id="CP000918">
    <property type="protein sequence ID" value="ACO17047.1"/>
    <property type="molecule type" value="Genomic_DNA"/>
</dbReference>
<dbReference type="RefSeq" id="WP_000180499.1">
    <property type="nucleotide sequence ID" value="NC_012468.1"/>
</dbReference>
<dbReference type="SMR" id="C1C6H3"/>
<dbReference type="KEGG" id="snm:SP70585_0875"/>
<dbReference type="HOGENOM" id="CLU_053818_1_1_9"/>
<dbReference type="UniPathway" id="UPA00241">
    <property type="reaction ID" value="UER00352"/>
</dbReference>
<dbReference type="Proteomes" id="UP000002211">
    <property type="component" value="Chromosome"/>
</dbReference>
<dbReference type="GO" id="GO:0005737">
    <property type="term" value="C:cytoplasm"/>
    <property type="evidence" value="ECO:0007669"/>
    <property type="project" value="UniProtKB-SubCell"/>
</dbReference>
<dbReference type="GO" id="GO:0005524">
    <property type="term" value="F:ATP binding"/>
    <property type="evidence" value="ECO:0007669"/>
    <property type="project" value="UniProtKB-UniRule"/>
</dbReference>
<dbReference type="GO" id="GO:0004594">
    <property type="term" value="F:pantothenate kinase activity"/>
    <property type="evidence" value="ECO:0007669"/>
    <property type="project" value="UniProtKB-UniRule"/>
</dbReference>
<dbReference type="GO" id="GO:0015937">
    <property type="term" value="P:coenzyme A biosynthetic process"/>
    <property type="evidence" value="ECO:0007669"/>
    <property type="project" value="UniProtKB-UniRule"/>
</dbReference>
<dbReference type="CDD" id="cd02025">
    <property type="entry name" value="PanK"/>
    <property type="match status" value="1"/>
</dbReference>
<dbReference type="FunFam" id="3.40.50.300:FF:001646">
    <property type="entry name" value="Pantothenate kinase"/>
    <property type="match status" value="1"/>
</dbReference>
<dbReference type="Gene3D" id="3.40.50.300">
    <property type="entry name" value="P-loop containing nucleotide triphosphate hydrolases"/>
    <property type="match status" value="1"/>
</dbReference>
<dbReference type="HAMAP" id="MF_00215">
    <property type="entry name" value="Pantothen_kinase_1"/>
    <property type="match status" value="1"/>
</dbReference>
<dbReference type="InterPro" id="IPR027417">
    <property type="entry name" value="P-loop_NTPase"/>
</dbReference>
<dbReference type="InterPro" id="IPR004566">
    <property type="entry name" value="PanK"/>
</dbReference>
<dbReference type="InterPro" id="IPR006083">
    <property type="entry name" value="PRK/URK"/>
</dbReference>
<dbReference type="NCBIfam" id="TIGR00554">
    <property type="entry name" value="panK_bact"/>
    <property type="match status" value="1"/>
</dbReference>
<dbReference type="PANTHER" id="PTHR10285">
    <property type="entry name" value="URIDINE KINASE"/>
    <property type="match status" value="1"/>
</dbReference>
<dbReference type="Pfam" id="PF00485">
    <property type="entry name" value="PRK"/>
    <property type="match status" value="1"/>
</dbReference>
<dbReference type="PIRSF" id="PIRSF000545">
    <property type="entry name" value="Pantothenate_kin"/>
    <property type="match status" value="1"/>
</dbReference>
<dbReference type="SUPFAM" id="SSF52540">
    <property type="entry name" value="P-loop containing nucleoside triphosphate hydrolases"/>
    <property type="match status" value="1"/>
</dbReference>
<reference key="1">
    <citation type="journal article" date="2010" name="Genome Biol.">
        <title>Structure and dynamics of the pan-genome of Streptococcus pneumoniae and closely related species.</title>
        <authorList>
            <person name="Donati C."/>
            <person name="Hiller N.L."/>
            <person name="Tettelin H."/>
            <person name="Muzzi A."/>
            <person name="Croucher N.J."/>
            <person name="Angiuoli S.V."/>
            <person name="Oggioni M."/>
            <person name="Dunning Hotopp J.C."/>
            <person name="Hu F.Z."/>
            <person name="Riley D.R."/>
            <person name="Covacci A."/>
            <person name="Mitchell T.J."/>
            <person name="Bentley S.D."/>
            <person name="Kilian M."/>
            <person name="Ehrlich G.D."/>
            <person name="Rappuoli R."/>
            <person name="Moxon E.R."/>
            <person name="Masignani V."/>
        </authorList>
    </citation>
    <scope>NUCLEOTIDE SEQUENCE [LARGE SCALE GENOMIC DNA]</scope>
    <source>
        <strain>70585</strain>
    </source>
</reference>
<accession>C1C6H3</accession>
<evidence type="ECO:0000255" key="1">
    <source>
        <dbReference type="HAMAP-Rule" id="MF_00215"/>
    </source>
</evidence>
<proteinExistence type="inferred from homology"/>